<accession>Q7ZT13</accession>
<feature type="signal peptide" evidence="1">
    <location>
        <begin position="1"/>
        <end position="21"/>
    </location>
</feature>
<feature type="chain" id="PRO_0000035421" description="Neurotoxin-like protein pMD18-NTL1/2/4/5">
    <location>
        <begin position="22"/>
        <end position="86"/>
    </location>
</feature>
<feature type="disulfide bond" evidence="2">
    <location>
        <begin position="24"/>
        <end position="45"/>
    </location>
</feature>
<feature type="disulfide bond" evidence="2">
    <location>
        <begin position="38"/>
        <end position="62"/>
    </location>
</feature>
<feature type="disulfide bond" evidence="2">
    <location>
        <begin position="66"/>
        <end position="78"/>
    </location>
</feature>
<feature type="disulfide bond" evidence="2">
    <location>
        <begin position="79"/>
        <end position="84"/>
    </location>
</feature>
<dbReference type="EMBL" id="AF459447">
    <property type="protein sequence ID" value="AAO47839.1"/>
    <property type="molecule type" value="mRNA"/>
</dbReference>
<dbReference type="EMBL" id="AF459448">
    <property type="protein sequence ID" value="AAO47840.1"/>
    <property type="molecule type" value="mRNA"/>
</dbReference>
<dbReference type="EMBL" id="AF459450">
    <property type="protein sequence ID" value="AAO47842.1"/>
    <property type="molecule type" value="mRNA"/>
</dbReference>
<dbReference type="EMBL" id="AF459451">
    <property type="protein sequence ID" value="AAO47843.1"/>
    <property type="molecule type" value="mRNA"/>
</dbReference>
<dbReference type="SMR" id="Q7ZT13"/>
<dbReference type="GO" id="GO:0005576">
    <property type="term" value="C:extracellular region"/>
    <property type="evidence" value="ECO:0007669"/>
    <property type="project" value="UniProtKB-SubCell"/>
</dbReference>
<dbReference type="GO" id="GO:0090729">
    <property type="term" value="F:toxin activity"/>
    <property type="evidence" value="ECO:0007669"/>
    <property type="project" value="UniProtKB-KW"/>
</dbReference>
<dbReference type="CDD" id="cd00206">
    <property type="entry name" value="TFP_snake_toxin"/>
    <property type="match status" value="1"/>
</dbReference>
<dbReference type="Gene3D" id="2.10.60.10">
    <property type="entry name" value="CD59"/>
    <property type="match status" value="1"/>
</dbReference>
<dbReference type="InterPro" id="IPR003571">
    <property type="entry name" value="Snake_3FTx"/>
</dbReference>
<dbReference type="InterPro" id="IPR045860">
    <property type="entry name" value="Snake_toxin-like_sf"/>
</dbReference>
<dbReference type="InterPro" id="IPR018354">
    <property type="entry name" value="Snake_toxin_con_site"/>
</dbReference>
<dbReference type="InterPro" id="IPR054131">
    <property type="entry name" value="Toxin_cobra-type"/>
</dbReference>
<dbReference type="Pfam" id="PF21947">
    <property type="entry name" value="Toxin_cobra-type"/>
    <property type="match status" value="1"/>
</dbReference>
<dbReference type="SUPFAM" id="SSF57302">
    <property type="entry name" value="Snake toxin-like"/>
    <property type="match status" value="1"/>
</dbReference>
<dbReference type="PROSITE" id="PS00272">
    <property type="entry name" value="SNAKE_TOXIN"/>
    <property type="match status" value="1"/>
</dbReference>
<name>3SO95_BUNMU</name>
<organism>
    <name type="scientific">Bungarus multicinctus</name>
    <name type="common">Many-banded krait</name>
    <dbReference type="NCBI Taxonomy" id="8616"/>
    <lineage>
        <taxon>Eukaryota</taxon>
        <taxon>Metazoa</taxon>
        <taxon>Chordata</taxon>
        <taxon>Craniata</taxon>
        <taxon>Vertebrata</taxon>
        <taxon>Euteleostomi</taxon>
        <taxon>Lepidosauria</taxon>
        <taxon>Squamata</taxon>
        <taxon>Bifurcata</taxon>
        <taxon>Unidentata</taxon>
        <taxon>Episquamata</taxon>
        <taxon>Toxicofera</taxon>
        <taxon>Serpentes</taxon>
        <taxon>Colubroidea</taxon>
        <taxon>Elapidae</taxon>
        <taxon>Bungarinae</taxon>
        <taxon>Bungarus</taxon>
    </lineage>
</organism>
<keyword id="KW-1015">Disulfide bond</keyword>
<keyword id="KW-0964">Secreted</keyword>
<keyword id="KW-0732">Signal</keyword>
<keyword id="KW-0800">Toxin</keyword>
<protein>
    <recommendedName>
        <fullName>Neurotoxin-like protein pMD18-NTL1/2/4/5</fullName>
    </recommendedName>
</protein>
<proteinExistence type="inferred from homology"/>
<reference key="1">
    <citation type="journal article" date="2003" name="Yi Chuan">
        <title>Cloning and characterization of cDNAs of cardiotoxin-like protein in Bungarus multicinctus venom gland.</title>
        <authorList>
            <person name="Wang F."/>
            <person name="Wang Y.Q."/>
            <person name="Tong Z.Z."/>
        </authorList>
    </citation>
    <scope>NUCLEOTIDE SEQUENCE [MRNA]</scope>
    <source>
        <tissue>Venom gland</tissue>
    </source>
</reference>
<sequence length="86" mass="9790">MKTLLLTLVVLTIACLDLGYTKTCFNDDLTNPKTTELCRHSMYFCFKNSWIAGGVERIERGCSLTCPDIKYNGKYIYCCTRDNCNA</sequence>
<evidence type="ECO:0000250" key="1"/>
<evidence type="ECO:0000250" key="2">
    <source>
        <dbReference type="UniProtKB" id="P60301"/>
    </source>
</evidence>
<evidence type="ECO:0000305" key="3"/>
<comment type="subcellular location">
    <subcellularLocation>
        <location evidence="1">Secreted</location>
    </subcellularLocation>
</comment>
<comment type="tissue specificity">
    <text evidence="3">Expressed by the venom gland.</text>
</comment>
<comment type="similarity">
    <text evidence="3">Belongs to the three-finger toxin family. Short-chain subfamily. Orphan group IX sub-subfamily.</text>
</comment>